<evidence type="ECO:0000256" key="1">
    <source>
        <dbReference type="SAM" id="MobiDB-lite"/>
    </source>
</evidence>
<dbReference type="EMBL" id="X15060">
    <property type="protein sequence ID" value="CAA33160.1"/>
    <property type="molecule type" value="Genomic_DNA"/>
</dbReference>
<dbReference type="PIR" id="S05572">
    <property type="entry name" value="S05572"/>
</dbReference>
<dbReference type="GO" id="GO:0005886">
    <property type="term" value="C:plasma membrane"/>
    <property type="evidence" value="ECO:0007669"/>
    <property type="project" value="InterPro"/>
</dbReference>
<dbReference type="GO" id="GO:0016989">
    <property type="term" value="F:sigma factor antagonist activity"/>
    <property type="evidence" value="ECO:0007669"/>
    <property type="project" value="TreeGrafter"/>
</dbReference>
<dbReference type="GO" id="GO:0006417">
    <property type="term" value="P:regulation of translation"/>
    <property type="evidence" value="ECO:0007669"/>
    <property type="project" value="TreeGrafter"/>
</dbReference>
<dbReference type="InterPro" id="IPR051474">
    <property type="entry name" value="Anti-sigma-K/W_factor"/>
</dbReference>
<dbReference type="InterPro" id="IPR018764">
    <property type="entry name" value="RskA_C"/>
</dbReference>
<dbReference type="PANTHER" id="PTHR37461">
    <property type="entry name" value="ANTI-SIGMA-K FACTOR RSKA"/>
    <property type="match status" value="1"/>
</dbReference>
<dbReference type="PANTHER" id="PTHR37461:SF1">
    <property type="entry name" value="ANTI-SIGMA-K FACTOR RSKA"/>
    <property type="match status" value="1"/>
</dbReference>
<dbReference type="Pfam" id="PF10099">
    <property type="entry name" value="RskA_C"/>
    <property type="match status" value="1"/>
</dbReference>
<reference key="1">
    <citation type="journal article" date="1989" name="Nucleic Acids Res.">
        <title>Molecular characterization of a gene encoding a photolyase from Streptomyces griseus.</title>
        <authorList>
            <person name="Kobayashi T."/>
            <person name="Takao M."/>
            <person name="Oikawa A."/>
            <person name="Yasui A."/>
        </authorList>
    </citation>
    <scope>NUCLEOTIDE SEQUENCE [GENOMIC DNA]</scope>
</reference>
<protein>
    <recommendedName>
        <fullName>Uncharacterized protein in phr 5'region</fullName>
    </recommendedName>
</protein>
<organism>
    <name type="scientific">Streptomyces griseus</name>
    <dbReference type="NCBI Taxonomy" id="1911"/>
    <lineage>
        <taxon>Bacteria</taxon>
        <taxon>Bacillati</taxon>
        <taxon>Actinomycetota</taxon>
        <taxon>Actinomycetes</taxon>
        <taxon>Kitasatosporales</taxon>
        <taxon>Streptomycetaceae</taxon>
        <taxon>Streptomyces</taxon>
    </lineage>
</organism>
<feature type="chain" id="PRO_0000066084" description="Uncharacterized protein in phr 5'region">
    <location>
        <begin position="1"/>
        <end position="238"/>
    </location>
</feature>
<feature type="region of interest" description="Disordered" evidence="1">
    <location>
        <begin position="1"/>
        <end position="51"/>
    </location>
</feature>
<feature type="region of interest" description="Disordered" evidence="1">
    <location>
        <begin position="214"/>
        <end position="238"/>
    </location>
</feature>
<feature type="compositionally biased region" description="Low complexity" evidence="1">
    <location>
        <begin position="16"/>
        <end position="31"/>
    </location>
</feature>
<name>Y24K_STRGR</name>
<accession>P12752</accession>
<proteinExistence type="predicted"/>
<sequence>MPCTHCRTPNGTSSSATWRTARPAPRRCGSCRPPPPGSASPSPRPRRASCATGCCGRSRPYARRLRRPADGHGPAGGGRTGRWYAYALAACVAAAAAFGGVAVWQNQVAQDARQQANQAQRQNERLAQVLSAPDAKTASSELTGGAHGTVVVSQSQNRAVFLASGMAPPPSGKVYQIWFNDEGTMRSAGLMDPKASDDAVLLNGPVDRASGMGITVEPAGGSAEPTSDPVALMNFPTA</sequence>